<keyword id="KW-0539">Nucleus</keyword>
<keyword id="KW-0597">Phosphoprotein</keyword>
<keyword id="KW-1185">Reference proteome</keyword>
<keyword id="KW-0804">Transcription</keyword>
<keyword id="KW-0805">Transcription regulation</keyword>
<comment type="function">
    <text evidence="3">Transcription factor that targets gene promoters containing 2 conserved CGAA repeat sequences (PubMed:30874562). Positively regulates the expression of ergosterol biosynthesis genes including CYP51A and CYP51B encoding the sterol 14-alpha demethylase, and ERG6A and ERG6B encoding the sterol 24-C-methyltransferase (PubMed:30874562).</text>
</comment>
<comment type="subunit">
    <text evidence="3">Interacts with HOG1.</text>
</comment>
<comment type="subcellular location">
    <subcellularLocation>
        <location evidence="3">Nucleus</location>
    </subcellularLocation>
</comment>
<comment type="PTM">
    <text evidence="3">Phosphorylation at Thr-82, Ser-92, Ser-102, thr-117 and ser-305 by HOG1 is required for regulating expression of ergosterol biosynthesis genes.</text>
</comment>
<comment type="disruption phenotype">
    <text evidence="3">Reduces the production of ergosterol (PubMed:30874562). Leads to increased sensitivity to azole compounds, but not to iprodione and fludioxonil that target the high osmolarity glycerol (HOG) pathway (PubMed:30874562).</text>
</comment>
<reference key="1">
    <citation type="journal article" date="2007" name="Science">
        <title>The Fusarium graminearum genome reveals a link between localized polymorphism and pathogen specialization.</title>
        <authorList>
            <person name="Cuomo C.A."/>
            <person name="Gueldener U."/>
            <person name="Xu J.-R."/>
            <person name="Trail F."/>
            <person name="Turgeon B.G."/>
            <person name="Di Pietro A."/>
            <person name="Walton J.D."/>
            <person name="Ma L.-J."/>
            <person name="Baker S.E."/>
            <person name="Rep M."/>
            <person name="Adam G."/>
            <person name="Antoniw J."/>
            <person name="Baldwin T."/>
            <person name="Calvo S.E."/>
            <person name="Chang Y.-L."/>
            <person name="DeCaprio D."/>
            <person name="Gale L.R."/>
            <person name="Gnerre S."/>
            <person name="Goswami R.S."/>
            <person name="Hammond-Kosack K."/>
            <person name="Harris L.J."/>
            <person name="Hilburn K."/>
            <person name="Kennell J.C."/>
            <person name="Kroken S."/>
            <person name="Magnuson J.K."/>
            <person name="Mannhaupt G."/>
            <person name="Mauceli E.W."/>
            <person name="Mewes H.-W."/>
            <person name="Mitterbauer R."/>
            <person name="Muehlbauer G."/>
            <person name="Muensterkoetter M."/>
            <person name="Nelson D."/>
            <person name="O'Donnell K."/>
            <person name="Ouellet T."/>
            <person name="Qi W."/>
            <person name="Quesneville H."/>
            <person name="Roncero M.I.G."/>
            <person name="Seong K.-Y."/>
            <person name="Tetko I.V."/>
            <person name="Urban M."/>
            <person name="Waalwijk C."/>
            <person name="Ward T.J."/>
            <person name="Yao J."/>
            <person name="Birren B.W."/>
            <person name="Kistler H.C."/>
        </authorList>
    </citation>
    <scope>NUCLEOTIDE SEQUENCE [LARGE SCALE GENOMIC DNA]</scope>
    <source>
        <strain>ATCC MYA-4620 / CBS 123657 / FGSC 9075 / NRRL 31084 / PH-1</strain>
    </source>
</reference>
<reference key="2">
    <citation type="journal article" date="2010" name="Nature">
        <title>Comparative genomics reveals mobile pathogenicity chromosomes in Fusarium.</title>
        <authorList>
            <person name="Ma L.-J."/>
            <person name="van der Does H.C."/>
            <person name="Borkovich K.A."/>
            <person name="Coleman J.J."/>
            <person name="Daboussi M.-J."/>
            <person name="Di Pietro A."/>
            <person name="Dufresne M."/>
            <person name="Freitag M."/>
            <person name="Grabherr M."/>
            <person name="Henrissat B."/>
            <person name="Houterman P.M."/>
            <person name="Kang S."/>
            <person name="Shim W.-B."/>
            <person name="Woloshuk C."/>
            <person name="Xie X."/>
            <person name="Xu J.-R."/>
            <person name="Antoniw J."/>
            <person name="Baker S.E."/>
            <person name="Bluhm B.H."/>
            <person name="Breakspear A."/>
            <person name="Brown D.W."/>
            <person name="Butchko R.A.E."/>
            <person name="Chapman S."/>
            <person name="Coulson R."/>
            <person name="Coutinho P.M."/>
            <person name="Danchin E.G.J."/>
            <person name="Diener A."/>
            <person name="Gale L.R."/>
            <person name="Gardiner D.M."/>
            <person name="Goff S."/>
            <person name="Hammond-Kosack K.E."/>
            <person name="Hilburn K."/>
            <person name="Hua-Van A."/>
            <person name="Jonkers W."/>
            <person name="Kazan K."/>
            <person name="Kodira C.D."/>
            <person name="Koehrsen M."/>
            <person name="Kumar L."/>
            <person name="Lee Y.-H."/>
            <person name="Li L."/>
            <person name="Manners J.M."/>
            <person name="Miranda-Saavedra D."/>
            <person name="Mukherjee M."/>
            <person name="Park G."/>
            <person name="Park J."/>
            <person name="Park S.-Y."/>
            <person name="Proctor R.H."/>
            <person name="Regev A."/>
            <person name="Ruiz-Roldan M.C."/>
            <person name="Sain D."/>
            <person name="Sakthikumar S."/>
            <person name="Sykes S."/>
            <person name="Schwartz D.C."/>
            <person name="Turgeon B.G."/>
            <person name="Wapinski I."/>
            <person name="Yoder O."/>
            <person name="Young S."/>
            <person name="Zeng Q."/>
            <person name="Zhou S."/>
            <person name="Galagan J."/>
            <person name="Cuomo C.A."/>
            <person name="Kistler H.C."/>
            <person name="Rep M."/>
        </authorList>
    </citation>
    <scope>GENOME REANNOTATION</scope>
    <source>
        <strain>ATCC MYA-4620 / CBS 123657 / FGSC 9075 / NRRL 31084 / PH-1</strain>
    </source>
</reference>
<reference key="3">
    <citation type="journal article" date="2015" name="BMC Genomics">
        <title>The completed genome sequence of the pathogenic ascomycete fungus Fusarium graminearum.</title>
        <authorList>
            <person name="King R."/>
            <person name="Urban M."/>
            <person name="Hammond-Kosack M.C.U."/>
            <person name="Hassani-Pak K."/>
            <person name="Hammond-Kosack K.E."/>
        </authorList>
    </citation>
    <scope>NUCLEOTIDE SEQUENCE [LARGE SCALE GENOMIC DNA]</scope>
    <source>
        <strain>ATCC MYA-4620 / CBS 123657 / FGSC 9075 / NRRL 31084 / PH-1</strain>
    </source>
</reference>
<reference key="4">
    <citation type="journal article" date="2019" name="Nat. Commun.">
        <title>A phosphorylated transcription factor regulates sterol biosynthesis in Fusarium graminearum.</title>
        <authorList>
            <person name="Liu Z."/>
            <person name="Jian Y."/>
            <person name="Chen Y."/>
            <person name="Kistler H.C."/>
            <person name="He P."/>
            <person name="Ma Z."/>
            <person name="Yin Y."/>
        </authorList>
    </citation>
    <scope>FUNCTION</scope>
    <scope>DISRUPTION PHENOTYPE</scope>
    <scope>SUBCELLULAR LOCATION</scope>
    <scope>PHOSPHORYLATION AT THR-82; SER-92; SER-102; THR-217 AND SER-305</scope>
    <scope>MUTAGENESIS OF THR-82; SER-92; SER-102; THR-217 AND SER-305</scope>
    <scope>INTERACTION WITH HOG1</scope>
</reference>
<gene>
    <name evidence="4" type="primary">SR</name>
    <name type="ORF">FG01176</name>
    <name type="ORF">FGRAMPH1_01T02919</name>
</gene>
<accession>I1RC73</accession>
<accession>A0A098D5P4</accession>
<name>FGSR_GIBZE</name>
<feature type="chain" id="PRO_0000454349" description="Zn(2)-C6 fungal-type transcription factor">
    <location>
        <begin position="1"/>
        <end position="492"/>
    </location>
</feature>
<feature type="DNA-binding region" description="Zn(2)-C6 fungal-type" evidence="1">
    <location>
        <begin position="14"/>
        <end position="41"/>
    </location>
</feature>
<feature type="region of interest" description="Disordered" evidence="2">
    <location>
        <begin position="58"/>
        <end position="119"/>
    </location>
</feature>
<feature type="compositionally biased region" description="Low complexity" evidence="2">
    <location>
        <begin position="78"/>
        <end position="95"/>
    </location>
</feature>
<feature type="compositionally biased region" description="Polar residues" evidence="2">
    <location>
        <begin position="107"/>
        <end position="119"/>
    </location>
</feature>
<feature type="modified residue" description="Phosphothreonine" evidence="3">
    <location>
        <position position="82"/>
    </location>
</feature>
<feature type="modified residue" description="Phosphoserine" evidence="3">
    <location>
        <position position="92"/>
    </location>
</feature>
<feature type="modified residue" description="Phosphoserine" evidence="3">
    <location>
        <position position="102"/>
    </location>
</feature>
<feature type="modified residue" description="Phosphothreonine" evidence="3">
    <location>
        <position position="217"/>
    </location>
</feature>
<feature type="modified residue" description="Phosphoserine" evidence="3">
    <location>
        <position position="305"/>
    </location>
</feature>
<feature type="mutagenesis site" description="Impairs phosphorylation by HOG1, blocks induction of CYP51A expression and exhibits hypersensitivity to tebuconazole; when associated with A-92, A-102, A-217 and A-305." evidence="3">
    <original>T</original>
    <variation>A</variation>
    <location>
        <position position="82"/>
    </location>
</feature>
<feature type="mutagenesis site" description="Mimics phosphorylation by HOG1; when associated with D-92, D-102, D-217 and D-305." evidence="3">
    <original>T</original>
    <variation>D</variation>
    <location>
        <position position="82"/>
    </location>
</feature>
<feature type="mutagenesis site" description="Impairs phosphorylation by HOG1, blocks induction of CYP51A expression and exhibits hypersensitivity to tebuconazole; when associated with A-82, A-102, A-217 and A-305." evidence="3">
    <original>S</original>
    <variation>A</variation>
    <location>
        <position position="92"/>
    </location>
</feature>
<feature type="mutagenesis site" description="Mimics phosphorylation by HOG1; when associated with D-82, D-102, D-217 and D-305." evidence="3">
    <original>S</original>
    <variation>D</variation>
    <location>
        <position position="92"/>
    </location>
</feature>
<feature type="mutagenesis site" description="Impairs phosphorylation by HOG1, blocks induction of CYP51A expression and exhibits hypersensitivity to tebuconazole; when associated with A-82, A-92, A-217 and A-305." evidence="3">
    <original>S</original>
    <variation>A</variation>
    <location>
        <position position="102"/>
    </location>
</feature>
<feature type="mutagenesis site" description="Mimics phosphorylation by HOG1; when associated with D-82, D-92, D-217 and D-305." evidence="3">
    <original>S</original>
    <variation>D</variation>
    <location>
        <position position="102"/>
    </location>
</feature>
<feature type="mutagenesis site" description="Impairs phosphorylation by HOG1, blocks induction of CYP51A expression and exhibits hypersensitivity to tebuconazole; when associated with A-82, A-92, A-102 and A-305." evidence="3">
    <original>T</original>
    <variation>A</variation>
    <location>
        <position position="217"/>
    </location>
</feature>
<feature type="mutagenesis site" description="Mimics phosphorylation by HOG1; when associated with D-82, D-92, D-102 and D-305." evidence="3">
    <original>T</original>
    <variation>D</variation>
    <location>
        <position position="217"/>
    </location>
</feature>
<feature type="mutagenesis site" description="Impairs phosphorylation by HOG1, blocks induction of CYP51A expression and exhibits hypersensitivity to tebuconazole; when associated with A-82, A-92, A-102 and A-217." evidence="3">
    <original>S</original>
    <variation>A</variation>
    <location>
        <position position="305"/>
    </location>
</feature>
<feature type="mutagenesis site" description="Mimics phosphorylation by HOG1; when associated with D-82, D-92, D-102 and D-217." evidence="3">
    <original>S</original>
    <variation>D</variation>
    <location>
        <position position="305"/>
    </location>
</feature>
<evidence type="ECO:0000255" key="1">
    <source>
        <dbReference type="PROSITE-ProRule" id="PRU00227"/>
    </source>
</evidence>
<evidence type="ECO:0000256" key="2">
    <source>
        <dbReference type="SAM" id="MobiDB-lite"/>
    </source>
</evidence>
<evidence type="ECO:0000269" key="3">
    <source>
    </source>
</evidence>
<evidence type="ECO:0000303" key="4">
    <source>
    </source>
</evidence>
<organism>
    <name type="scientific">Gibberella zeae (strain ATCC MYA-4620 / CBS 123657 / FGSC 9075 / NRRL 31084 / PH-1)</name>
    <name type="common">Wheat head blight fungus</name>
    <name type="synonym">Fusarium graminearum</name>
    <dbReference type="NCBI Taxonomy" id="229533"/>
    <lineage>
        <taxon>Eukaryota</taxon>
        <taxon>Fungi</taxon>
        <taxon>Dikarya</taxon>
        <taxon>Ascomycota</taxon>
        <taxon>Pezizomycotina</taxon>
        <taxon>Sordariomycetes</taxon>
        <taxon>Hypocreomycetidae</taxon>
        <taxon>Hypocreales</taxon>
        <taxon>Nectriaceae</taxon>
        <taxon>Fusarium</taxon>
    </lineage>
</organism>
<dbReference type="EMBL" id="HG970332">
    <property type="protein sequence ID" value="CEF73261.1"/>
    <property type="molecule type" value="Genomic_DNA"/>
</dbReference>
<dbReference type="RefSeq" id="XP_011316947.1">
    <property type="nucleotide sequence ID" value="XM_011318645.1"/>
</dbReference>
<dbReference type="SMR" id="I1RC73"/>
<dbReference type="STRING" id="229533.I1RC73"/>
<dbReference type="iPTMnet" id="I1RC73"/>
<dbReference type="KEGG" id="fgr:FGSG_01176"/>
<dbReference type="VEuPathDB" id="FungiDB:FGRAMPH1_01G02919"/>
<dbReference type="eggNOG" id="ENOG502SP5N">
    <property type="taxonomic scope" value="Eukaryota"/>
</dbReference>
<dbReference type="HOGENOM" id="CLU_024934_6_2_1"/>
<dbReference type="InParanoid" id="I1RC73"/>
<dbReference type="OrthoDB" id="89305at110618"/>
<dbReference type="PHI-base" id="PHI:1933"/>
<dbReference type="PHI-base" id="PHI:6134"/>
<dbReference type="Proteomes" id="UP000070720">
    <property type="component" value="Chromosome 1"/>
</dbReference>
<dbReference type="GO" id="GO:0005634">
    <property type="term" value="C:nucleus"/>
    <property type="evidence" value="ECO:0007669"/>
    <property type="project" value="UniProtKB-SubCell"/>
</dbReference>
<dbReference type="GO" id="GO:0000981">
    <property type="term" value="F:DNA-binding transcription factor activity, RNA polymerase II-specific"/>
    <property type="evidence" value="ECO:0007669"/>
    <property type="project" value="InterPro"/>
</dbReference>
<dbReference type="GO" id="GO:0008270">
    <property type="term" value="F:zinc ion binding"/>
    <property type="evidence" value="ECO:0007669"/>
    <property type="project" value="InterPro"/>
</dbReference>
<dbReference type="CDD" id="cd00067">
    <property type="entry name" value="GAL4"/>
    <property type="match status" value="1"/>
</dbReference>
<dbReference type="Gene3D" id="4.10.240.10">
    <property type="entry name" value="Zn(2)-C6 fungal-type DNA-binding domain"/>
    <property type="match status" value="1"/>
</dbReference>
<dbReference type="InterPro" id="IPR021858">
    <property type="entry name" value="Fun_TF"/>
</dbReference>
<dbReference type="InterPro" id="IPR036864">
    <property type="entry name" value="Zn2-C6_fun-type_DNA-bd_sf"/>
</dbReference>
<dbReference type="InterPro" id="IPR052400">
    <property type="entry name" value="Zn2-C6_fungal_TF"/>
</dbReference>
<dbReference type="InterPro" id="IPR001138">
    <property type="entry name" value="Zn2Cys6_DnaBD"/>
</dbReference>
<dbReference type="PANTHER" id="PTHR47657">
    <property type="entry name" value="STEROL REGULATORY ELEMENT-BINDING PROTEIN ECM22"/>
    <property type="match status" value="1"/>
</dbReference>
<dbReference type="PANTHER" id="PTHR47657:SF14">
    <property type="entry name" value="ZN(2)-C6 FUNGAL-TYPE DOMAIN-CONTAINING PROTEIN"/>
    <property type="match status" value="1"/>
</dbReference>
<dbReference type="Pfam" id="PF11951">
    <property type="entry name" value="Fungal_trans_2"/>
    <property type="match status" value="1"/>
</dbReference>
<dbReference type="Pfam" id="PF00172">
    <property type="entry name" value="Zn_clus"/>
    <property type="match status" value="1"/>
</dbReference>
<dbReference type="SMART" id="SM00066">
    <property type="entry name" value="GAL4"/>
    <property type="match status" value="1"/>
</dbReference>
<dbReference type="SUPFAM" id="SSF57701">
    <property type="entry name" value="Zn2/Cys6 DNA-binding domain"/>
    <property type="match status" value="1"/>
</dbReference>
<dbReference type="PROSITE" id="PS00463">
    <property type="entry name" value="ZN2_CY6_FUNGAL_1"/>
    <property type="match status" value="1"/>
</dbReference>
<dbReference type="PROSITE" id="PS50048">
    <property type="entry name" value="ZN2_CY6_FUNGAL_2"/>
    <property type="match status" value="1"/>
</dbReference>
<sequence>MPPRRSHKKSRAGCRRCKNRKIKCDEVHPRCGNCAKHGVPCDFSNPDVLEELAISTNTSTESVGAPTPSPAPTVNFNSAPRTPLTRPRAPSSPARAPRPNPSPPTSVYSQPSISSSTNTIDHGERMLELRLMHHYTNVTSKTLLTNSPAAEDIWQRAVPQMAFSGNGKTYLADAILSVAALHLRSMSPNDKALVRASHAYSASSLSAFGASLGAGITPENAEALFLTATLIAFQASASRIFVKDDGDAAPGDPTVRYVPPLSWFHAFQGVKTVVANSWQWIHHSDIVKVIIDSQPSFQLNLNPRSPDSFFGHMLEGLADELSNEDPRLVASTTQAYSHAVSVLNWAHKNYHAAAALTFTATVSKRYVDLVDARRPRALAILACFFALLKRMDNVWWLQDVARREVMGLVSLFEPGSKWWRHLEWPIRIAVLDGSSIPQDIWGTELEEQAPEQQNVLGSMTQHIEMFAEMLNQHTQPPIPIADEDLIVPDSPD</sequence>
<proteinExistence type="evidence at protein level"/>
<protein>
    <recommendedName>
        <fullName evidence="4">Zn(2)-C6 fungal-type transcription factor</fullName>
    </recommendedName>
</protein>